<keyword id="KW-0131">Cell cycle</keyword>
<keyword id="KW-0132">Cell division</keyword>
<keyword id="KW-0966">Cell projection</keyword>
<keyword id="KW-0175">Coiled coil</keyword>
<keyword id="KW-0963">Cytoplasm</keyword>
<keyword id="KW-0968">Cytoplasmic vesicle</keyword>
<keyword id="KW-0206">Cytoskeleton</keyword>
<keyword id="KW-0342">GTP-binding</keyword>
<keyword id="KW-0547">Nucleotide-binding</keyword>
<keyword id="KW-1185">Reference proteome</keyword>
<name>SEP14_MOUSE</name>
<accession>Q9DA97</accession>
<accession>E9QMM2</accession>
<feature type="chain" id="PRO_0000294426" description="Septin-14">
    <location>
        <begin position="1"/>
        <end position="430"/>
    </location>
</feature>
<feature type="domain" description="Septin-type G" evidence="4">
    <location>
        <begin position="48"/>
        <end position="313"/>
    </location>
</feature>
<feature type="region of interest" description="G1 motif" evidence="4">
    <location>
        <begin position="58"/>
        <end position="65"/>
    </location>
</feature>
<feature type="region of interest" description="G3 motif" evidence="4">
    <location>
        <begin position="110"/>
        <end position="113"/>
    </location>
</feature>
<feature type="region of interest" description="G4 motif" evidence="4">
    <location>
        <begin position="193"/>
        <end position="196"/>
    </location>
</feature>
<feature type="region of interest" description="Required for interaction with SEPTIN4. Required for migration of cortical neurons during corticogenesis" evidence="5">
    <location>
        <begin position="367"/>
        <end position="430"/>
    </location>
</feature>
<feature type="coiled-coil region" evidence="3">
    <location>
        <begin position="329"/>
        <end position="410"/>
    </location>
</feature>
<feature type="binding site" evidence="1">
    <location>
        <begin position="58"/>
        <end position="65"/>
    </location>
    <ligand>
        <name>GTP</name>
        <dbReference type="ChEBI" id="CHEBI:37565"/>
    </ligand>
</feature>
<feature type="binding site" evidence="1">
    <location>
        <position position="113"/>
    </location>
    <ligand>
        <name>GTP</name>
        <dbReference type="ChEBI" id="CHEBI:37565"/>
    </ligand>
</feature>
<feature type="binding site" evidence="1">
    <location>
        <begin position="194"/>
        <end position="202"/>
    </location>
    <ligand>
        <name>GTP</name>
        <dbReference type="ChEBI" id="CHEBI:37565"/>
    </ligand>
</feature>
<feature type="binding site" evidence="1">
    <location>
        <position position="246"/>
    </location>
    <ligand>
        <name>GTP</name>
        <dbReference type="ChEBI" id="CHEBI:37565"/>
    </ligand>
</feature>
<feature type="binding site" evidence="1">
    <location>
        <position position="261"/>
    </location>
    <ligand>
        <name>GTP</name>
        <dbReference type="ChEBI" id="CHEBI:37565"/>
    </ligand>
</feature>
<feature type="sequence conflict" description="In Ref. 2; BAB24381." evidence="7" ref="2">
    <location>
        <position position="270"/>
    </location>
</feature>
<dbReference type="EMBL" id="AC120413">
    <property type="status" value="NOT_ANNOTATED_CDS"/>
    <property type="molecule type" value="Genomic_DNA"/>
</dbReference>
<dbReference type="EMBL" id="AK006043">
    <property type="protein sequence ID" value="BAB24381.1"/>
    <property type="status" value="ALT_SEQ"/>
    <property type="molecule type" value="mRNA"/>
</dbReference>
<dbReference type="RefSeq" id="NP_083102.1">
    <property type="nucleotide sequence ID" value="NM_028826.1"/>
</dbReference>
<dbReference type="SMR" id="Q9DA97"/>
<dbReference type="BioGRID" id="216586">
    <property type="interactions" value="2"/>
</dbReference>
<dbReference type="FunCoup" id="Q9DA97">
    <property type="interactions" value="15"/>
</dbReference>
<dbReference type="STRING" id="10090.ENSMUSP00000138729"/>
<dbReference type="iPTMnet" id="Q9DA97"/>
<dbReference type="PhosphoSitePlus" id="Q9DA97"/>
<dbReference type="SwissPalm" id="Q9DA97"/>
<dbReference type="jPOST" id="Q9DA97"/>
<dbReference type="PaxDb" id="10090-ENSMUSP00000044272"/>
<dbReference type="PeptideAtlas" id="Q9DA97"/>
<dbReference type="ProteomicsDB" id="256778"/>
<dbReference type="Antibodypedia" id="56888">
    <property type="antibodies" value="89 antibodies from 20 providers"/>
</dbReference>
<dbReference type="GeneID" id="74222"/>
<dbReference type="KEGG" id="mmu:74222"/>
<dbReference type="AGR" id="MGI:1921472"/>
<dbReference type="CTD" id="346288"/>
<dbReference type="MGI" id="MGI:1921472">
    <property type="gene designation" value="Septin14"/>
</dbReference>
<dbReference type="VEuPathDB" id="HostDB:ENSMUSG00000034219"/>
<dbReference type="eggNOG" id="KOG3859">
    <property type="taxonomic scope" value="Eukaryota"/>
</dbReference>
<dbReference type="InParanoid" id="Q9DA97"/>
<dbReference type="OrthoDB" id="416553at2759"/>
<dbReference type="PhylomeDB" id="Q9DA97"/>
<dbReference type="TreeFam" id="TF101080"/>
<dbReference type="BioGRID-ORCS" id="74222">
    <property type="hits" value="1 hit in 49 CRISPR screens"/>
</dbReference>
<dbReference type="PRO" id="PR:Q9DA97"/>
<dbReference type="Proteomes" id="UP000000589">
    <property type="component" value="Chromosome 5"/>
</dbReference>
<dbReference type="RNAct" id="Q9DA97">
    <property type="molecule type" value="protein"/>
</dbReference>
<dbReference type="Bgee" id="ENSMUSG00000034219">
    <property type="expression patterns" value="Expressed in animal zygote and 6 other cell types or tissues"/>
</dbReference>
<dbReference type="ExpressionAtlas" id="Q9DA97">
    <property type="expression patterns" value="baseline and differential"/>
</dbReference>
<dbReference type="GO" id="GO:0001669">
    <property type="term" value="C:acrosomal vesicle"/>
    <property type="evidence" value="ECO:0000250"/>
    <property type="project" value="UniProtKB"/>
</dbReference>
<dbReference type="GO" id="GO:0030424">
    <property type="term" value="C:axon"/>
    <property type="evidence" value="ECO:0000314"/>
    <property type="project" value="UniProtKB"/>
</dbReference>
<dbReference type="GO" id="GO:0005737">
    <property type="term" value="C:cytoplasm"/>
    <property type="evidence" value="ECO:0000314"/>
    <property type="project" value="UniProtKB"/>
</dbReference>
<dbReference type="GO" id="GO:0005856">
    <property type="term" value="C:cytoskeleton"/>
    <property type="evidence" value="ECO:0000250"/>
    <property type="project" value="UniProtKB"/>
</dbReference>
<dbReference type="GO" id="GO:0030425">
    <property type="term" value="C:dendrite"/>
    <property type="evidence" value="ECO:0000314"/>
    <property type="project" value="UniProtKB"/>
</dbReference>
<dbReference type="GO" id="GO:0043204">
    <property type="term" value="C:perikaryon"/>
    <property type="evidence" value="ECO:0000314"/>
    <property type="project" value="UniProtKB"/>
</dbReference>
<dbReference type="GO" id="GO:0048471">
    <property type="term" value="C:perinuclear region of cytoplasm"/>
    <property type="evidence" value="ECO:0000314"/>
    <property type="project" value="UniProtKB"/>
</dbReference>
<dbReference type="GO" id="GO:0005525">
    <property type="term" value="F:GTP binding"/>
    <property type="evidence" value="ECO:0007669"/>
    <property type="project" value="UniProtKB-KW"/>
</dbReference>
<dbReference type="GO" id="GO:0051301">
    <property type="term" value="P:cell division"/>
    <property type="evidence" value="ECO:0007669"/>
    <property type="project" value="UniProtKB-KW"/>
</dbReference>
<dbReference type="GO" id="GO:0001764">
    <property type="term" value="P:neuron migration"/>
    <property type="evidence" value="ECO:0000315"/>
    <property type="project" value="UniProtKB"/>
</dbReference>
<dbReference type="GO" id="GO:1905719">
    <property type="term" value="P:protein localization to perinuclear region of cytoplasm"/>
    <property type="evidence" value="ECO:0000250"/>
    <property type="project" value="UniProtKB"/>
</dbReference>
<dbReference type="GO" id="GO:0007286">
    <property type="term" value="P:spermatid development"/>
    <property type="evidence" value="ECO:0000250"/>
    <property type="project" value="UniProtKB"/>
</dbReference>
<dbReference type="CDD" id="cd01850">
    <property type="entry name" value="CDC_Septin"/>
    <property type="match status" value="1"/>
</dbReference>
<dbReference type="FunFam" id="3.40.50.300:FF:003926">
    <property type="entry name" value="Septin 14"/>
    <property type="match status" value="1"/>
</dbReference>
<dbReference type="Gene3D" id="3.40.50.300">
    <property type="entry name" value="P-loop containing nucleotide triphosphate hydrolases"/>
    <property type="match status" value="1"/>
</dbReference>
<dbReference type="InterPro" id="IPR030379">
    <property type="entry name" value="G_SEPTIN_dom"/>
</dbReference>
<dbReference type="InterPro" id="IPR027417">
    <property type="entry name" value="P-loop_NTPase"/>
</dbReference>
<dbReference type="InterPro" id="IPR016491">
    <property type="entry name" value="Septin"/>
</dbReference>
<dbReference type="PANTHER" id="PTHR18884">
    <property type="entry name" value="SEPTIN"/>
    <property type="match status" value="1"/>
</dbReference>
<dbReference type="Pfam" id="PF00735">
    <property type="entry name" value="Septin"/>
    <property type="match status" value="1"/>
</dbReference>
<dbReference type="PIRSF" id="PIRSF006698">
    <property type="entry name" value="Septin"/>
    <property type="match status" value="1"/>
</dbReference>
<dbReference type="SUPFAM" id="SSF52540">
    <property type="entry name" value="P-loop containing nucleoside triphosphate hydrolases"/>
    <property type="match status" value="1"/>
</dbReference>
<dbReference type="PROSITE" id="PS51719">
    <property type="entry name" value="G_SEPTIN"/>
    <property type="match status" value="1"/>
</dbReference>
<protein>
    <recommendedName>
        <fullName evidence="8">Septin-14</fullName>
    </recommendedName>
</protein>
<organism>
    <name type="scientific">Mus musculus</name>
    <name type="common">Mouse</name>
    <dbReference type="NCBI Taxonomy" id="10090"/>
    <lineage>
        <taxon>Eukaryota</taxon>
        <taxon>Metazoa</taxon>
        <taxon>Chordata</taxon>
        <taxon>Craniata</taxon>
        <taxon>Vertebrata</taxon>
        <taxon>Euteleostomi</taxon>
        <taxon>Mammalia</taxon>
        <taxon>Eutheria</taxon>
        <taxon>Euarchontoglires</taxon>
        <taxon>Glires</taxon>
        <taxon>Rodentia</taxon>
        <taxon>Myomorpha</taxon>
        <taxon>Muroidea</taxon>
        <taxon>Muridae</taxon>
        <taxon>Murinae</taxon>
        <taxon>Mus</taxon>
        <taxon>Mus</taxon>
    </lineage>
</organism>
<comment type="function">
    <text evidence="2 5 7">Filament-forming cytoskeletal GTPase (Probable). Involved in the migration of cortical neurons and the formation of neuron leading processes during embryonic development (PubMed:20181826). Plays a role in sperm head formation during spermiogenesis, potentially via facilitating localization of ACTN4 to cell filaments (By similarity).</text>
</comment>
<comment type="subunit">
    <text evidence="2 5 6">Septins polymerize into heterooligomeric protein complexes that form filaments, and can associate with cellular membranes, actin filaments and microtubules. GTPase activity is required for filament formation. Interacts with ACTN4 (PubMed:33228246). Interacts with SEPTIN9 (By similarity). Interacts (via C-terminus) with SEPTIN4 (PubMed:20181826).</text>
</comment>
<comment type="subcellular location">
    <subcellularLocation>
        <location evidence="5">Cytoplasm</location>
    </subcellularLocation>
    <subcellularLocation>
        <location evidence="6">Cytoplasm</location>
        <location evidence="6">Cytoskeleton</location>
    </subcellularLocation>
    <subcellularLocation>
        <location evidence="5">Cell projection</location>
        <location evidence="5">Axon</location>
    </subcellularLocation>
    <subcellularLocation>
        <location evidence="5">Cell projection</location>
        <location evidence="5">Dendrite</location>
    </subcellularLocation>
    <subcellularLocation>
        <location evidence="5">Perikaryon</location>
    </subcellularLocation>
    <subcellularLocation>
        <location evidence="6">Cytoplasm</location>
        <location evidence="6">Perinuclear region</location>
    </subcellularLocation>
    <subcellularLocation>
        <location evidence="2">Cytoplasmic vesicle</location>
        <location evidence="2">Secretory vesicle</location>
        <location evidence="2">Acrosome</location>
    </subcellularLocation>
    <text evidence="2 6">Colocalizes with actin stress fibers (By similarity). Expressed in the perinuclear rim and manchette structure in early elongating spermatids during spermiogenesis (PubMed:33228246).</text>
</comment>
<comment type="tissue specificity">
    <text evidence="5">Expressed in the testis and brain including the cerebrum, hippocampus and cerebellum (at protein level).</text>
</comment>
<comment type="developmental stage">
    <text evidence="5 6">Expressed in the cerebral cortex from 15.5 dpc reaching maximum expression at 17.5 dpc, expression remains robust until P30 (PubMed:20181826). Expressed in early elongating spermatids during spermiogenesis (PubMed:33228246).</text>
</comment>
<comment type="similarity">
    <text evidence="4">Belongs to the TRAFAC class TrmE-Era-EngA-EngB-Septin-like GTPase superfamily. Septin GTPase family.</text>
</comment>
<comment type="sequence caution" evidence="7">
    <conflict type="miscellaneous discrepancy">
        <sequence resource="EMBL-CDS" id="BAB24381"/>
    </conflict>
    <text>Intron retention.</text>
</comment>
<proteinExistence type="evidence at protein level"/>
<gene>
    <name evidence="8" type="primary">Septin14</name>
    <name evidence="8" type="synonym">Sept14</name>
</gene>
<sequence>MAEKPTNTSVPIPGSEDPQKENIRCLSTLGHFGFECLPTQLVNKSIQKGFSFNILCVGETGIGKTTLINTLFNTNLKETKSSHFYSKVGLTVKTYELLERNIPLRLTVVKTVGYGDQINKEASYQPVVDYLDAQFEAYLQEELKIKRSLADYHDSRIHVCLYFITPTGHSLKSLDLLTMKSIDRRVNIIPLIAKADSLSKNDLQRFKNNIMSELNSNGIQIYQFQVDDEASAQVNSSGLLPFAVVGSMEEVKVGKRMVRGRHYPWGVLQEVENENHCDFVKLRDLLLSTNMEDLKDQTHTQHYECYRSNRLQKLGFSDTGPDNRPVSFQEMYEAKRREFHNQCQKEEEELKQTFMQRVKEKELTFKDAEKELQDKFEHLKRIQQEEILKLEEERRKLEEQIIDFYKMKAASESAQAQVCTNIKKDKDRKK</sequence>
<reference key="1">
    <citation type="journal article" date="2009" name="PLoS Biol.">
        <title>Lineage-specific biology revealed by a finished genome assembly of the mouse.</title>
        <authorList>
            <person name="Church D.M."/>
            <person name="Goodstadt L."/>
            <person name="Hillier L.W."/>
            <person name="Zody M.C."/>
            <person name="Goldstein S."/>
            <person name="She X."/>
            <person name="Bult C.J."/>
            <person name="Agarwala R."/>
            <person name="Cherry J.L."/>
            <person name="DiCuccio M."/>
            <person name="Hlavina W."/>
            <person name="Kapustin Y."/>
            <person name="Meric P."/>
            <person name="Maglott D."/>
            <person name="Birtle Z."/>
            <person name="Marques A.C."/>
            <person name="Graves T."/>
            <person name="Zhou S."/>
            <person name="Teague B."/>
            <person name="Potamousis K."/>
            <person name="Churas C."/>
            <person name="Place M."/>
            <person name="Herschleb J."/>
            <person name="Runnheim R."/>
            <person name="Forrest D."/>
            <person name="Amos-Landgraf J."/>
            <person name="Schwartz D.C."/>
            <person name="Cheng Z."/>
            <person name="Lindblad-Toh K."/>
            <person name="Eichler E.E."/>
            <person name="Ponting C.P."/>
        </authorList>
    </citation>
    <scope>NUCLEOTIDE SEQUENCE [LARGE SCALE GENOMIC DNA]</scope>
    <source>
        <strain>C57BL/6J</strain>
    </source>
</reference>
<reference key="2">
    <citation type="journal article" date="2005" name="Science">
        <title>The transcriptional landscape of the mammalian genome.</title>
        <authorList>
            <person name="Carninci P."/>
            <person name="Kasukawa T."/>
            <person name="Katayama S."/>
            <person name="Gough J."/>
            <person name="Frith M.C."/>
            <person name="Maeda N."/>
            <person name="Oyama R."/>
            <person name="Ravasi T."/>
            <person name="Lenhard B."/>
            <person name="Wells C."/>
            <person name="Kodzius R."/>
            <person name="Shimokawa K."/>
            <person name="Bajic V.B."/>
            <person name="Brenner S.E."/>
            <person name="Batalov S."/>
            <person name="Forrest A.R."/>
            <person name="Zavolan M."/>
            <person name="Davis M.J."/>
            <person name="Wilming L.G."/>
            <person name="Aidinis V."/>
            <person name="Allen J.E."/>
            <person name="Ambesi-Impiombato A."/>
            <person name="Apweiler R."/>
            <person name="Aturaliya R.N."/>
            <person name="Bailey T.L."/>
            <person name="Bansal M."/>
            <person name="Baxter L."/>
            <person name="Beisel K.W."/>
            <person name="Bersano T."/>
            <person name="Bono H."/>
            <person name="Chalk A.M."/>
            <person name="Chiu K.P."/>
            <person name="Choudhary V."/>
            <person name="Christoffels A."/>
            <person name="Clutterbuck D.R."/>
            <person name="Crowe M.L."/>
            <person name="Dalla E."/>
            <person name="Dalrymple B.P."/>
            <person name="de Bono B."/>
            <person name="Della Gatta G."/>
            <person name="di Bernardo D."/>
            <person name="Down T."/>
            <person name="Engstrom P."/>
            <person name="Fagiolini M."/>
            <person name="Faulkner G."/>
            <person name="Fletcher C.F."/>
            <person name="Fukushima T."/>
            <person name="Furuno M."/>
            <person name="Futaki S."/>
            <person name="Gariboldi M."/>
            <person name="Georgii-Hemming P."/>
            <person name="Gingeras T.R."/>
            <person name="Gojobori T."/>
            <person name="Green R.E."/>
            <person name="Gustincich S."/>
            <person name="Harbers M."/>
            <person name="Hayashi Y."/>
            <person name="Hensch T.K."/>
            <person name="Hirokawa N."/>
            <person name="Hill D."/>
            <person name="Huminiecki L."/>
            <person name="Iacono M."/>
            <person name="Ikeo K."/>
            <person name="Iwama A."/>
            <person name="Ishikawa T."/>
            <person name="Jakt M."/>
            <person name="Kanapin A."/>
            <person name="Katoh M."/>
            <person name="Kawasawa Y."/>
            <person name="Kelso J."/>
            <person name="Kitamura H."/>
            <person name="Kitano H."/>
            <person name="Kollias G."/>
            <person name="Krishnan S.P."/>
            <person name="Kruger A."/>
            <person name="Kummerfeld S.K."/>
            <person name="Kurochkin I.V."/>
            <person name="Lareau L.F."/>
            <person name="Lazarevic D."/>
            <person name="Lipovich L."/>
            <person name="Liu J."/>
            <person name="Liuni S."/>
            <person name="McWilliam S."/>
            <person name="Madan Babu M."/>
            <person name="Madera M."/>
            <person name="Marchionni L."/>
            <person name="Matsuda H."/>
            <person name="Matsuzawa S."/>
            <person name="Miki H."/>
            <person name="Mignone F."/>
            <person name="Miyake S."/>
            <person name="Morris K."/>
            <person name="Mottagui-Tabar S."/>
            <person name="Mulder N."/>
            <person name="Nakano N."/>
            <person name="Nakauchi H."/>
            <person name="Ng P."/>
            <person name="Nilsson R."/>
            <person name="Nishiguchi S."/>
            <person name="Nishikawa S."/>
            <person name="Nori F."/>
            <person name="Ohara O."/>
            <person name="Okazaki Y."/>
            <person name="Orlando V."/>
            <person name="Pang K.C."/>
            <person name="Pavan W.J."/>
            <person name="Pavesi G."/>
            <person name="Pesole G."/>
            <person name="Petrovsky N."/>
            <person name="Piazza S."/>
            <person name="Reed J."/>
            <person name="Reid J.F."/>
            <person name="Ring B.Z."/>
            <person name="Ringwald M."/>
            <person name="Rost B."/>
            <person name="Ruan Y."/>
            <person name="Salzberg S.L."/>
            <person name="Sandelin A."/>
            <person name="Schneider C."/>
            <person name="Schoenbach C."/>
            <person name="Sekiguchi K."/>
            <person name="Semple C.A."/>
            <person name="Seno S."/>
            <person name="Sessa L."/>
            <person name="Sheng Y."/>
            <person name="Shibata Y."/>
            <person name="Shimada H."/>
            <person name="Shimada K."/>
            <person name="Silva D."/>
            <person name="Sinclair B."/>
            <person name="Sperling S."/>
            <person name="Stupka E."/>
            <person name="Sugiura K."/>
            <person name="Sultana R."/>
            <person name="Takenaka Y."/>
            <person name="Taki K."/>
            <person name="Tammoja K."/>
            <person name="Tan S.L."/>
            <person name="Tang S."/>
            <person name="Taylor M.S."/>
            <person name="Tegner J."/>
            <person name="Teichmann S.A."/>
            <person name="Ueda H.R."/>
            <person name="van Nimwegen E."/>
            <person name="Verardo R."/>
            <person name="Wei C.L."/>
            <person name="Yagi K."/>
            <person name="Yamanishi H."/>
            <person name="Zabarovsky E."/>
            <person name="Zhu S."/>
            <person name="Zimmer A."/>
            <person name="Hide W."/>
            <person name="Bult C."/>
            <person name="Grimmond S.M."/>
            <person name="Teasdale R.D."/>
            <person name="Liu E.T."/>
            <person name="Brusic V."/>
            <person name="Quackenbush J."/>
            <person name="Wahlestedt C."/>
            <person name="Mattick J.S."/>
            <person name="Hume D.A."/>
            <person name="Kai C."/>
            <person name="Sasaki D."/>
            <person name="Tomaru Y."/>
            <person name="Fukuda S."/>
            <person name="Kanamori-Katayama M."/>
            <person name="Suzuki M."/>
            <person name="Aoki J."/>
            <person name="Arakawa T."/>
            <person name="Iida J."/>
            <person name="Imamura K."/>
            <person name="Itoh M."/>
            <person name="Kato T."/>
            <person name="Kawaji H."/>
            <person name="Kawagashira N."/>
            <person name="Kawashima T."/>
            <person name="Kojima M."/>
            <person name="Kondo S."/>
            <person name="Konno H."/>
            <person name="Nakano K."/>
            <person name="Ninomiya N."/>
            <person name="Nishio T."/>
            <person name="Okada M."/>
            <person name="Plessy C."/>
            <person name="Shibata K."/>
            <person name="Shiraki T."/>
            <person name="Suzuki S."/>
            <person name="Tagami M."/>
            <person name="Waki K."/>
            <person name="Watahiki A."/>
            <person name="Okamura-Oho Y."/>
            <person name="Suzuki H."/>
            <person name="Kawai J."/>
            <person name="Hayashizaki Y."/>
        </authorList>
    </citation>
    <scope>NUCLEOTIDE SEQUENCE [LARGE SCALE MRNA] OF 186-430</scope>
    <source>
        <strain>C57BL/6J</strain>
        <tissue>Testis</tissue>
    </source>
</reference>
<reference key="3">
    <citation type="journal article" date="2010" name="Cell">
        <title>A tissue-specific atlas of mouse protein phosphorylation and expression.</title>
        <authorList>
            <person name="Huttlin E.L."/>
            <person name="Jedrychowski M.P."/>
            <person name="Elias J.E."/>
            <person name="Goswami T."/>
            <person name="Rad R."/>
            <person name="Beausoleil S.A."/>
            <person name="Villen J."/>
            <person name="Haas W."/>
            <person name="Sowa M.E."/>
            <person name="Gygi S.P."/>
        </authorList>
    </citation>
    <scope>IDENTIFICATION BY MASS SPECTROMETRY [LARGE SCALE ANALYSIS]</scope>
    <source>
        <tissue>Testis</tissue>
    </source>
</reference>
<reference key="4">
    <citation type="journal article" date="2010" name="Mol. Biol. Cell">
        <title>Septin 14 is involved in cortical neuronal migration via interaction with Septin 4.</title>
        <authorList>
            <person name="Shinoda T."/>
            <person name="Ito H."/>
            <person name="Sudo K."/>
            <person name="Iwamoto I."/>
            <person name="Morishita R."/>
            <person name="Nagata K."/>
        </authorList>
    </citation>
    <scope>FUNCTION</scope>
    <scope>INTERACTION WITH SEPTIN4</scope>
    <scope>SUBCELLULAR LOCATION</scope>
    <scope>TISSUE SPECIFICITY</scope>
    <scope>DEVELOPMENTAL STAGE</scope>
</reference>
<reference key="5">
    <citation type="journal article" date="2020" name="Biomedicines">
        <title>ACTN4 Mediates SEPT14 Mutation-Induced Sperm Head Defects.</title>
        <authorList>
            <person name="Lin Y.H."/>
            <person name="Huang C.Y."/>
            <person name="Ke C.C."/>
            <person name="Wang Y.Y."/>
            <person name="Lai T.H."/>
            <person name="Liu H.C."/>
            <person name="Ku W.C."/>
            <person name="Chan C.C."/>
            <person name="Lin Y.H."/>
        </authorList>
    </citation>
    <scope>INTERACTION WITH ACTN4</scope>
    <scope>SUBCELLULAR LOCATION</scope>
    <scope>DEVELOPMENTAL STAGE</scope>
</reference>
<evidence type="ECO:0000250" key="1"/>
<evidence type="ECO:0000250" key="2">
    <source>
        <dbReference type="UniProtKB" id="Q6ZU15"/>
    </source>
</evidence>
<evidence type="ECO:0000255" key="3"/>
<evidence type="ECO:0000255" key="4">
    <source>
        <dbReference type="PROSITE-ProRule" id="PRU01056"/>
    </source>
</evidence>
<evidence type="ECO:0000269" key="5">
    <source>
    </source>
</evidence>
<evidence type="ECO:0000269" key="6">
    <source>
    </source>
</evidence>
<evidence type="ECO:0000305" key="7"/>
<evidence type="ECO:0000312" key="8">
    <source>
        <dbReference type="MGI" id="MGI:1921472"/>
    </source>
</evidence>